<protein>
    <recommendedName>
        <fullName evidence="1">Glycerol-3-phosphate dehydrogenase [NAD(P)+]</fullName>
        <ecNumber evidence="1">1.1.1.94</ecNumber>
    </recommendedName>
    <alternativeName>
        <fullName evidence="1">NAD(P)(+)-dependent glycerol-3-phosphate dehydrogenase</fullName>
    </alternativeName>
    <alternativeName>
        <fullName evidence="1">NAD(P)H-dependent dihydroxyacetone-phosphate reductase</fullName>
    </alternativeName>
</protein>
<gene>
    <name evidence="1" type="primary">gpsA</name>
    <name type="ordered locus">Fphi_0440</name>
</gene>
<accession>B0U030</accession>
<sequence length="332" mass="36678">MHKKILVLGAGAWGTALALQLAYKGHEVRINSWKAEHNDQMLAEGNNQKYLPSIEKFPDTLKAIQNWQASIEYFDDILVATPSSGFKKTIFELKDCMLPHQNIISATKGFCHDTYALLSEIAEDIIPNTKFALLTGPSFAKEVANKLPTAVVVASKDIEYAKYTQKLFSNENFRCYTTTDIIGAQVGGAVKNVLAIAAGIAAGMDFGVNAHAALITRGLAEIKKLGLKLGADVETFMGLSCLGDLLLTCSDNQSRNRRFGYYLGQGMSIEESLHKVNNVVEGYSTAIAVYKLAQKHEVDMPLVFATYRVLYENVDPKDMVRQLMTRQLKNEN</sequence>
<keyword id="KW-0963">Cytoplasm</keyword>
<keyword id="KW-0444">Lipid biosynthesis</keyword>
<keyword id="KW-0443">Lipid metabolism</keyword>
<keyword id="KW-0520">NAD</keyword>
<keyword id="KW-0521">NADP</keyword>
<keyword id="KW-0547">Nucleotide-binding</keyword>
<keyword id="KW-0560">Oxidoreductase</keyword>
<keyword id="KW-0594">Phospholipid biosynthesis</keyword>
<keyword id="KW-1208">Phospholipid metabolism</keyword>
<evidence type="ECO:0000255" key="1">
    <source>
        <dbReference type="HAMAP-Rule" id="MF_00394"/>
    </source>
</evidence>
<feature type="chain" id="PRO_1000080308" description="Glycerol-3-phosphate dehydrogenase [NAD(P)+]">
    <location>
        <begin position="1"/>
        <end position="332"/>
    </location>
</feature>
<feature type="active site" description="Proton acceptor" evidence="1">
    <location>
        <position position="191"/>
    </location>
</feature>
<feature type="binding site" evidence="1">
    <location>
        <position position="13"/>
    </location>
    <ligand>
        <name>NADPH</name>
        <dbReference type="ChEBI" id="CHEBI:57783"/>
    </ligand>
</feature>
<feature type="binding site" evidence="1">
    <location>
        <position position="34"/>
    </location>
    <ligand>
        <name>NADPH</name>
        <dbReference type="ChEBI" id="CHEBI:57783"/>
    </ligand>
</feature>
<feature type="binding site" evidence="1">
    <location>
        <position position="108"/>
    </location>
    <ligand>
        <name>NADPH</name>
        <dbReference type="ChEBI" id="CHEBI:57783"/>
    </ligand>
</feature>
<feature type="binding site" evidence="1">
    <location>
        <position position="108"/>
    </location>
    <ligand>
        <name>sn-glycerol 3-phosphate</name>
        <dbReference type="ChEBI" id="CHEBI:57597"/>
    </ligand>
</feature>
<feature type="binding site" evidence="1">
    <location>
        <position position="136"/>
    </location>
    <ligand>
        <name>sn-glycerol 3-phosphate</name>
        <dbReference type="ChEBI" id="CHEBI:57597"/>
    </ligand>
</feature>
<feature type="binding site" evidence="1">
    <location>
        <position position="138"/>
    </location>
    <ligand>
        <name>sn-glycerol 3-phosphate</name>
        <dbReference type="ChEBI" id="CHEBI:57597"/>
    </ligand>
</feature>
<feature type="binding site" evidence="1">
    <location>
        <position position="140"/>
    </location>
    <ligand>
        <name>NADPH</name>
        <dbReference type="ChEBI" id="CHEBI:57783"/>
    </ligand>
</feature>
<feature type="binding site" evidence="1">
    <location>
        <position position="191"/>
    </location>
    <ligand>
        <name>sn-glycerol 3-phosphate</name>
        <dbReference type="ChEBI" id="CHEBI:57597"/>
    </ligand>
</feature>
<feature type="binding site" evidence="1">
    <location>
        <position position="244"/>
    </location>
    <ligand>
        <name>sn-glycerol 3-phosphate</name>
        <dbReference type="ChEBI" id="CHEBI:57597"/>
    </ligand>
</feature>
<feature type="binding site" evidence="1">
    <location>
        <position position="254"/>
    </location>
    <ligand>
        <name>sn-glycerol 3-phosphate</name>
        <dbReference type="ChEBI" id="CHEBI:57597"/>
    </ligand>
</feature>
<feature type="binding site" evidence="1">
    <location>
        <position position="255"/>
    </location>
    <ligand>
        <name>NADPH</name>
        <dbReference type="ChEBI" id="CHEBI:57783"/>
    </ligand>
</feature>
<feature type="binding site" evidence="1">
    <location>
        <position position="255"/>
    </location>
    <ligand>
        <name>sn-glycerol 3-phosphate</name>
        <dbReference type="ChEBI" id="CHEBI:57597"/>
    </ligand>
</feature>
<feature type="binding site" evidence="1">
    <location>
        <position position="256"/>
    </location>
    <ligand>
        <name>sn-glycerol 3-phosphate</name>
        <dbReference type="ChEBI" id="CHEBI:57597"/>
    </ligand>
</feature>
<feature type="binding site" evidence="1">
    <location>
        <position position="279"/>
    </location>
    <ligand>
        <name>NADPH</name>
        <dbReference type="ChEBI" id="CHEBI:57783"/>
    </ligand>
</feature>
<feature type="binding site" evidence="1">
    <location>
        <position position="281"/>
    </location>
    <ligand>
        <name>NADPH</name>
        <dbReference type="ChEBI" id="CHEBI:57783"/>
    </ligand>
</feature>
<name>GPDA_FRAP2</name>
<comment type="function">
    <text evidence="1">Catalyzes the reduction of the glycolytic intermediate dihydroxyacetone phosphate (DHAP) to sn-glycerol 3-phosphate (G3P), the key precursor for phospholipid synthesis.</text>
</comment>
<comment type="catalytic activity">
    <reaction evidence="1">
        <text>sn-glycerol 3-phosphate + NAD(+) = dihydroxyacetone phosphate + NADH + H(+)</text>
        <dbReference type="Rhea" id="RHEA:11092"/>
        <dbReference type="ChEBI" id="CHEBI:15378"/>
        <dbReference type="ChEBI" id="CHEBI:57540"/>
        <dbReference type="ChEBI" id="CHEBI:57597"/>
        <dbReference type="ChEBI" id="CHEBI:57642"/>
        <dbReference type="ChEBI" id="CHEBI:57945"/>
        <dbReference type="EC" id="1.1.1.94"/>
    </reaction>
    <physiologicalReaction direction="right-to-left" evidence="1">
        <dbReference type="Rhea" id="RHEA:11094"/>
    </physiologicalReaction>
</comment>
<comment type="catalytic activity">
    <reaction evidence="1">
        <text>sn-glycerol 3-phosphate + NADP(+) = dihydroxyacetone phosphate + NADPH + H(+)</text>
        <dbReference type="Rhea" id="RHEA:11096"/>
        <dbReference type="ChEBI" id="CHEBI:15378"/>
        <dbReference type="ChEBI" id="CHEBI:57597"/>
        <dbReference type="ChEBI" id="CHEBI:57642"/>
        <dbReference type="ChEBI" id="CHEBI:57783"/>
        <dbReference type="ChEBI" id="CHEBI:58349"/>
        <dbReference type="EC" id="1.1.1.94"/>
    </reaction>
    <physiologicalReaction direction="right-to-left" evidence="1">
        <dbReference type="Rhea" id="RHEA:11098"/>
    </physiologicalReaction>
</comment>
<comment type="pathway">
    <text evidence="1">Membrane lipid metabolism; glycerophospholipid metabolism.</text>
</comment>
<comment type="subcellular location">
    <subcellularLocation>
        <location evidence="1">Cytoplasm</location>
    </subcellularLocation>
</comment>
<comment type="similarity">
    <text evidence="1">Belongs to the NAD-dependent glycerol-3-phosphate dehydrogenase family.</text>
</comment>
<proteinExistence type="inferred from homology"/>
<reference key="1">
    <citation type="submission" date="2007-12" db="EMBL/GenBank/DDBJ databases">
        <title>Complete sequence of chromosome of Francisella philomiragia subsp. philomiragia ATCC 25017.</title>
        <authorList>
            <consortium name="US DOE Joint Genome Institute"/>
            <person name="Copeland A."/>
            <person name="Lucas S."/>
            <person name="Lapidus A."/>
            <person name="Barry K."/>
            <person name="Detter J.C."/>
            <person name="Glavina del Rio T."/>
            <person name="Hammon N."/>
            <person name="Israni S."/>
            <person name="Dalin E."/>
            <person name="Tice H."/>
            <person name="Pitluck S."/>
            <person name="Chain P."/>
            <person name="Malfatti S."/>
            <person name="Shin M."/>
            <person name="Vergez L."/>
            <person name="Schmutz J."/>
            <person name="Larimer F."/>
            <person name="Land M."/>
            <person name="Hauser L."/>
            <person name="Richardson P."/>
        </authorList>
    </citation>
    <scope>NUCLEOTIDE SEQUENCE [LARGE SCALE GENOMIC DNA]</scope>
    <source>
        <strain>ATCC 25017 / CCUG 19701 / FSC 153 / O#319-036</strain>
    </source>
</reference>
<dbReference type="EC" id="1.1.1.94" evidence="1"/>
<dbReference type="EMBL" id="CP000937">
    <property type="protein sequence ID" value="ABZ86659.1"/>
    <property type="molecule type" value="Genomic_DNA"/>
</dbReference>
<dbReference type="SMR" id="B0U030"/>
<dbReference type="KEGG" id="fph:Fphi_0440"/>
<dbReference type="eggNOG" id="COG0240">
    <property type="taxonomic scope" value="Bacteria"/>
</dbReference>
<dbReference type="HOGENOM" id="CLU_033449_0_2_6"/>
<dbReference type="UniPathway" id="UPA00940"/>
<dbReference type="GO" id="GO:0005829">
    <property type="term" value="C:cytosol"/>
    <property type="evidence" value="ECO:0007669"/>
    <property type="project" value="TreeGrafter"/>
</dbReference>
<dbReference type="GO" id="GO:0047952">
    <property type="term" value="F:glycerol-3-phosphate dehydrogenase [NAD(P)+] activity"/>
    <property type="evidence" value="ECO:0007669"/>
    <property type="project" value="UniProtKB-UniRule"/>
</dbReference>
<dbReference type="GO" id="GO:0051287">
    <property type="term" value="F:NAD binding"/>
    <property type="evidence" value="ECO:0007669"/>
    <property type="project" value="InterPro"/>
</dbReference>
<dbReference type="GO" id="GO:0005975">
    <property type="term" value="P:carbohydrate metabolic process"/>
    <property type="evidence" value="ECO:0007669"/>
    <property type="project" value="InterPro"/>
</dbReference>
<dbReference type="GO" id="GO:0046167">
    <property type="term" value="P:glycerol-3-phosphate biosynthetic process"/>
    <property type="evidence" value="ECO:0007669"/>
    <property type="project" value="UniProtKB-UniRule"/>
</dbReference>
<dbReference type="GO" id="GO:0046168">
    <property type="term" value="P:glycerol-3-phosphate catabolic process"/>
    <property type="evidence" value="ECO:0007669"/>
    <property type="project" value="InterPro"/>
</dbReference>
<dbReference type="GO" id="GO:0046474">
    <property type="term" value="P:glycerophospholipid biosynthetic process"/>
    <property type="evidence" value="ECO:0007669"/>
    <property type="project" value="TreeGrafter"/>
</dbReference>
<dbReference type="FunFam" id="1.10.1040.10:FF:000001">
    <property type="entry name" value="Glycerol-3-phosphate dehydrogenase [NAD(P)+]"/>
    <property type="match status" value="1"/>
</dbReference>
<dbReference type="FunFam" id="3.40.50.720:FF:000019">
    <property type="entry name" value="Glycerol-3-phosphate dehydrogenase [NAD(P)+]"/>
    <property type="match status" value="1"/>
</dbReference>
<dbReference type="Gene3D" id="1.10.1040.10">
    <property type="entry name" value="N-(1-d-carboxylethyl)-l-norvaline Dehydrogenase, domain 2"/>
    <property type="match status" value="1"/>
</dbReference>
<dbReference type="Gene3D" id="3.40.50.720">
    <property type="entry name" value="NAD(P)-binding Rossmann-like Domain"/>
    <property type="match status" value="1"/>
</dbReference>
<dbReference type="HAMAP" id="MF_00394">
    <property type="entry name" value="NAD_Glyc3P_dehydrog"/>
    <property type="match status" value="1"/>
</dbReference>
<dbReference type="InterPro" id="IPR008927">
    <property type="entry name" value="6-PGluconate_DH-like_C_sf"/>
</dbReference>
<dbReference type="InterPro" id="IPR013328">
    <property type="entry name" value="6PGD_dom2"/>
</dbReference>
<dbReference type="InterPro" id="IPR006168">
    <property type="entry name" value="G3P_DH_NAD-dep"/>
</dbReference>
<dbReference type="InterPro" id="IPR006109">
    <property type="entry name" value="G3P_DH_NAD-dep_C"/>
</dbReference>
<dbReference type="InterPro" id="IPR011128">
    <property type="entry name" value="G3P_DH_NAD-dep_N"/>
</dbReference>
<dbReference type="InterPro" id="IPR036291">
    <property type="entry name" value="NAD(P)-bd_dom_sf"/>
</dbReference>
<dbReference type="NCBIfam" id="NF000940">
    <property type="entry name" value="PRK00094.1-2"/>
    <property type="match status" value="1"/>
</dbReference>
<dbReference type="NCBIfam" id="NF000942">
    <property type="entry name" value="PRK00094.1-4"/>
    <property type="match status" value="1"/>
</dbReference>
<dbReference type="PANTHER" id="PTHR11728">
    <property type="entry name" value="GLYCEROL-3-PHOSPHATE DEHYDROGENASE"/>
    <property type="match status" value="1"/>
</dbReference>
<dbReference type="PANTHER" id="PTHR11728:SF1">
    <property type="entry name" value="GLYCEROL-3-PHOSPHATE DEHYDROGENASE [NAD(+)] 2, CHLOROPLASTIC"/>
    <property type="match status" value="1"/>
</dbReference>
<dbReference type="Pfam" id="PF07479">
    <property type="entry name" value="NAD_Gly3P_dh_C"/>
    <property type="match status" value="1"/>
</dbReference>
<dbReference type="Pfam" id="PF01210">
    <property type="entry name" value="NAD_Gly3P_dh_N"/>
    <property type="match status" value="1"/>
</dbReference>
<dbReference type="PIRSF" id="PIRSF000114">
    <property type="entry name" value="Glycerol-3-P_dh"/>
    <property type="match status" value="1"/>
</dbReference>
<dbReference type="PRINTS" id="PR00077">
    <property type="entry name" value="GPDHDRGNASE"/>
</dbReference>
<dbReference type="SUPFAM" id="SSF48179">
    <property type="entry name" value="6-phosphogluconate dehydrogenase C-terminal domain-like"/>
    <property type="match status" value="1"/>
</dbReference>
<dbReference type="SUPFAM" id="SSF51735">
    <property type="entry name" value="NAD(P)-binding Rossmann-fold domains"/>
    <property type="match status" value="1"/>
</dbReference>
<dbReference type="PROSITE" id="PS00957">
    <property type="entry name" value="NAD_G3PDH"/>
    <property type="match status" value="1"/>
</dbReference>
<organism>
    <name type="scientific">Francisella philomiragia subsp. philomiragia (strain ATCC 25017 / CCUG 19701 / FSC 153 / O#319-036)</name>
    <dbReference type="NCBI Taxonomy" id="484022"/>
    <lineage>
        <taxon>Bacteria</taxon>
        <taxon>Pseudomonadati</taxon>
        <taxon>Pseudomonadota</taxon>
        <taxon>Gammaproteobacteria</taxon>
        <taxon>Thiotrichales</taxon>
        <taxon>Francisellaceae</taxon>
        <taxon>Francisella</taxon>
    </lineage>
</organism>